<gene>
    <name evidence="15" type="primary">GABRA2</name>
</gene>
<keyword id="KW-0002">3D-structure</keyword>
<keyword id="KW-0025">Alternative splicing</keyword>
<keyword id="KW-1003">Cell membrane</keyword>
<keyword id="KW-0966">Cell projection</keyword>
<keyword id="KW-0868">Chloride</keyword>
<keyword id="KW-0869">Chloride channel</keyword>
<keyword id="KW-0968">Cytoplasmic vesicle</keyword>
<keyword id="KW-0225">Disease variant</keyword>
<keyword id="KW-1015">Disulfide bond</keyword>
<keyword id="KW-0887">Epilepsy</keyword>
<keyword id="KW-0325">Glycoprotein</keyword>
<keyword id="KW-0407">Ion channel</keyword>
<keyword id="KW-0406">Ion transport</keyword>
<keyword id="KW-1071">Ligand-gated ion channel</keyword>
<keyword id="KW-0472">Membrane</keyword>
<keyword id="KW-0628">Postsynaptic cell membrane</keyword>
<keyword id="KW-1267">Proteomics identification</keyword>
<keyword id="KW-0675">Receptor</keyword>
<keyword id="KW-1185">Reference proteome</keyword>
<keyword id="KW-0732">Signal</keyword>
<keyword id="KW-0770">Synapse</keyword>
<keyword id="KW-0812">Transmembrane</keyword>
<keyword id="KW-1133">Transmembrane helix</keyword>
<keyword id="KW-0813">Transport</keyword>
<organism>
    <name type="scientific">Homo sapiens</name>
    <name type="common">Human</name>
    <dbReference type="NCBI Taxonomy" id="9606"/>
    <lineage>
        <taxon>Eukaryota</taxon>
        <taxon>Metazoa</taxon>
        <taxon>Chordata</taxon>
        <taxon>Craniata</taxon>
        <taxon>Vertebrata</taxon>
        <taxon>Euteleostomi</taxon>
        <taxon>Mammalia</taxon>
        <taxon>Eutheria</taxon>
        <taxon>Euarchontoglires</taxon>
        <taxon>Primates</taxon>
        <taxon>Haplorrhini</taxon>
        <taxon>Catarrhini</taxon>
        <taxon>Hominidae</taxon>
        <taxon>Homo</taxon>
    </lineage>
</organism>
<accession>P47869</accession>
<accession>A8K0U7</accession>
<accession>B7Z1H8</accession>
<accession>Q59G14</accession>
<feature type="signal peptide" evidence="7">
    <location>
        <begin position="1"/>
        <end position="28"/>
    </location>
</feature>
<feature type="chain" id="PRO_0000000433" description="Gamma-aminobutyric acid receptor subunit alpha-2">
    <location>
        <begin position="29"/>
        <end position="451"/>
    </location>
</feature>
<feature type="topological domain" description="Extracellular" evidence="14">
    <location>
        <begin position="29"/>
        <end position="249"/>
    </location>
</feature>
<feature type="transmembrane region" description="Helical" evidence="7">
    <location>
        <begin position="250"/>
        <end position="270"/>
    </location>
</feature>
<feature type="topological domain" description="Cytoplasmic" evidence="14">
    <location>
        <begin position="271"/>
        <end position="280"/>
    </location>
</feature>
<feature type="transmembrane region" description="Helical" evidence="7">
    <location>
        <begin position="281"/>
        <end position="300"/>
    </location>
</feature>
<feature type="topological domain" description="Extracellular" evidence="14">
    <location>
        <begin position="301"/>
        <end position="311"/>
    </location>
</feature>
<feature type="transmembrane region" description="Helical" evidence="7">
    <location>
        <begin position="312"/>
        <end position="332"/>
    </location>
</feature>
<feature type="topological domain" description="Cytoplasmic" evidence="14">
    <location>
        <begin position="333"/>
        <end position="420"/>
    </location>
</feature>
<feature type="transmembrane region" description="Helical" evidence="7">
    <location>
        <begin position="421"/>
        <end position="441"/>
    </location>
</feature>
<feature type="topological domain" description="Extracellular" evidence="14">
    <location>
        <begin position="442"/>
        <end position="451"/>
    </location>
</feature>
<feature type="binding site" evidence="2">
    <location>
        <position position="94"/>
    </location>
    <ligand>
        <name>4-aminobutanoate</name>
        <dbReference type="ChEBI" id="CHEBI:59888"/>
        <note>ligand shared with the neighboring beta subunit</note>
    </ligand>
</feature>
<feature type="binding site" evidence="6">
    <location>
        <position position="157"/>
    </location>
    <ligand>
        <name>4-aminobutanoate</name>
        <dbReference type="ChEBI" id="CHEBI:59888"/>
        <note>ligand shared with the neighboring beta subunit</note>
    </ligand>
</feature>
<feature type="glycosylation site" description="N-linked (GlcNAc...) asparagine" evidence="7">
    <location>
        <position position="38"/>
    </location>
</feature>
<feature type="glycosylation site" description="N-linked (GlcNAc...) asparagine" evidence="7">
    <location>
        <position position="138"/>
    </location>
</feature>
<feature type="disulfide bond" evidence="5">
    <location>
        <begin position="166"/>
        <end position="180"/>
    </location>
</feature>
<feature type="splice variant" id="VSP_054277" description="In isoform 2." evidence="12">
    <original>MKTKLNIYNMQFLLFVFLVWDPARLVLANIQEDEAKNNITIFTRILDRLLDGYDNRLRPGLGDSITEVFTNIYVTSFGPVSDTDM</original>
    <variation>MRLKITLPSLREFLTDFWMVTIIGLDQDWE</variation>
    <location>
        <begin position="1"/>
        <end position="85"/>
    </location>
</feature>
<feature type="splice variant" id="VSP_054278" description="In isoform 2." evidence="12">
    <original>K</original>
    <variation>KSPSIKAEGITLTYNSVKAILQGAKLIWSKYIAFSWPSLFQEKTLEYLEKWMDCLTFKQSS</variation>
    <location>
        <position position="353"/>
    </location>
</feature>
<feature type="sequence variant" id="VAR_083186" description="In DEE78; impaired GABA-gated chloride ion channel activity." evidence="11">
    <original>M</original>
    <variation>T</variation>
    <location>
        <position position="263"/>
    </location>
</feature>
<feature type="sequence variant" id="VAR_083187" description="In DEE78; impaired GABA-gated chloride ion channel activity." evidence="11">
    <original>V</original>
    <variation>A</variation>
    <location>
        <position position="284"/>
    </location>
</feature>
<feature type="sequence variant" id="VAR_083188" description="In DEE78; impaired GABA-gated chloride ion channel activity." evidence="11">
    <original>L</original>
    <variation>V</variation>
    <location>
        <position position="291"/>
    </location>
</feature>
<feature type="sequence variant" id="VAR_083189" description="In DEE78; impaired GABA-gated chloride ion channel activity." evidence="10">
    <original>T</original>
    <variation>K</variation>
    <location>
        <position position="292"/>
    </location>
</feature>
<feature type="sequence variant" id="VAR_083190" description="In DEE78; impaired GABA-gated chloride ion channel activity." evidence="11">
    <original>F</original>
    <variation>L</variation>
    <location>
        <position position="325"/>
    </location>
</feature>
<feature type="sequence variant" id="VAR_083191" description="In DEE78; uncertain significance." evidence="9">
    <original>N</original>
    <variation>H</variation>
    <location>
        <position position="335"/>
    </location>
</feature>
<feature type="sequence variant" id="VAR_083192" description="Found in a patient with epilepsy; uncertain significance." evidence="10">
    <original>N</original>
    <variation>K</variation>
    <location>
        <position position="377"/>
    </location>
</feature>
<feature type="sequence conflict" description="In Ref. 1; AAB27278." evidence="14" ref="1">
    <original>MQ</original>
    <variation>IE</variation>
    <location>
        <begin position="10"/>
        <end position="11"/>
    </location>
</feature>
<feature type="sequence conflict" description="In Ref. 1; AAB27278." evidence="14" ref="1">
    <original>A</original>
    <variation>T</variation>
    <location>
        <position position="343"/>
    </location>
</feature>
<dbReference type="EMBL" id="S62907">
    <property type="protein sequence ID" value="AAB27278.1"/>
    <property type="molecule type" value="mRNA"/>
</dbReference>
<dbReference type="EMBL" id="AK125179">
    <property type="protein sequence ID" value="BAG54159.1"/>
    <property type="molecule type" value="mRNA"/>
</dbReference>
<dbReference type="EMBL" id="AK289662">
    <property type="protein sequence ID" value="BAF82351.1"/>
    <property type="molecule type" value="mRNA"/>
</dbReference>
<dbReference type="EMBL" id="AK293466">
    <property type="protein sequence ID" value="BAH11514.1"/>
    <property type="molecule type" value="mRNA"/>
</dbReference>
<dbReference type="EMBL" id="AB209295">
    <property type="protein sequence ID" value="BAD92532.1"/>
    <property type="status" value="ALT_INIT"/>
    <property type="molecule type" value="mRNA"/>
</dbReference>
<dbReference type="EMBL" id="AC084352">
    <property type="status" value="NOT_ANNOTATED_CDS"/>
    <property type="molecule type" value="Genomic_DNA"/>
</dbReference>
<dbReference type="EMBL" id="AC093745">
    <property type="status" value="NOT_ANNOTATED_CDS"/>
    <property type="molecule type" value="Genomic_DNA"/>
</dbReference>
<dbReference type="EMBL" id="AC095060">
    <property type="status" value="NOT_ANNOTATED_CDS"/>
    <property type="molecule type" value="Genomic_DNA"/>
</dbReference>
<dbReference type="EMBL" id="AC104072">
    <property type="status" value="NOT_ANNOTATED_CDS"/>
    <property type="molecule type" value="Genomic_DNA"/>
</dbReference>
<dbReference type="EMBL" id="CH471069">
    <property type="protein sequence ID" value="EAW93022.1"/>
    <property type="molecule type" value="Genomic_DNA"/>
</dbReference>
<dbReference type="CCDS" id="CCDS3471.1">
    <molecule id="P47869-1"/>
</dbReference>
<dbReference type="PIR" id="I57947">
    <property type="entry name" value="I57947"/>
</dbReference>
<dbReference type="RefSeq" id="NP_000798.2">
    <molecule id="P47869-1"/>
    <property type="nucleotide sequence ID" value="NM_000807.4"/>
</dbReference>
<dbReference type="RefSeq" id="NP_001107647.1">
    <molecule id="P47869-1"/>
    <property type="nucleotide sequence ID" value="NM_001114175.3"/>
</dbReference>
<dbReference type="RefSeq" id="NP_001273756.1">
    <molecule id="P47869-2"/>
    <property type="nucleotide sequence ID" value="NM_001286827.3"/>
</dbReference>
<dbReference type="RefSeq" id="NP_001317619.1">
    <property type="nucleotide sequence ID" value="NM_001330690.1"/>
</dbReference>
<dbReference type="RefSeq" id="NP_001364075.1">
    <molecule id="P47869-1"/>
    <property type="nucleotide sequence ID" value="NM_001377146.1"/>
</dbReference>
<dbReference type="RefSeq" id="NP_001364076.1">
    <molecule id="P47869-1"/>
    <property type="nucleotide sequence ID" value="NM_001377147.1"/>
</dbReference>
<dbReference type="RefSeq" id="NP_001364077.1">
    <molecule id="P47869-1"/>
    <property type="nucleotide sequence ID" value="NM_001377148.1"/>
</dbReference>
<dbReference type="RefSeq" id="NP_001364078.1">
    <molecule id="P47869-1"/>
    <property type="nucleotide sequence ID" value="NM_001377149.1"/>
</dbReference>
<dbReference type="RefSeq" id="NP_001364079.1">
    <molecule id="P47869-1"/>
    <property type="nucleotide sequence ID" value="NM_001377150.1"/>
</dbReference>
<dbReference type="RefSeq" id="NP_001364080.1">
    <molecule id="P47869-1"/>
    <property type="nucleotide sequence ID" value="NM_001377151.1"/>
</dbReference>
<dbReference type="RefSeq" id="XP_016863471.1">
    <property type="nucleotide sequence ID" value="XM_017007982.1"/>
</dbReference>
<dbReference type="RefSeq" id="XP_016863472.1">
    <property type="nucleotide sequence ID" value="XM_017007983.1"/>
</dbReference>
<dbReference type="PDB" id="9CRV">
    <property type="method" value="EM"/>
    <property type="resolution" value="3.18 A"/>
    <property type="chains" value="E=29-451"/>
</dbReference>
<dbReference type="PDB" id="9CSB">
    <property type="method" value="EM"/>
    <property type="resolution" value="3.34 A"/>
    <property type="chains" value="D=29-451"/>
</dbReference>
<dbReference type="PDB" id="9CT0">
    <property type="method" value="EM"/>
    <property type="resolution" value="3.19 A"/>
    <property type="chains" value="D=29-451"/>
</dbReference>
<dbReference type="PDB" id="9CTJ">
    <property type="method" value="EM"/>
    <property type="resolution" value="3.74 A"/>
    <property type="chains" value="D=29-451"/>
</dbReference>
<dbReference type="PDB" id="9CTV">
    <property type="method" value="EM"/>
    <property type="resolution" value="3.36 A"/>
    <property type="chains" value="E=29-451"/>
</dbReference>
<dbReference type="PDB" id="9CX7">
    <property type="method" value="EM"/>
    <property type="resolution" value="3.30 A"/>
    <property type="chains" value="E=29-451"/>
</dbReference>
<dbReference type="PDB" id="9CXB">
    <property type="method" value="EM"/>
    <property type="resolution" value="3.33 A"/>
    <property type="chains" value="D=29-451"/>
</dbReference>
<dbReference type="PDB" id="9CXC">
    <property type="method" value="EM"/>
    <property type="resolution" value="3.30 A"/>
    <property type="chains" value="E=29-451"/>
</dbReference>
<dbReference type="PDBsum" id="9CRV"/>
<dbReference type="PDBsum" id="9CSB"/>
<dbReference type="PDBsum" id="9CT0"/>
<dbReference type="PDBsum" id="9CTJ"/>
<dbReference type="PDBsum" id="9CTV"/>
<dbReference type="PDBsum" id="9CX7"/>
<dbReference type="PDBsum" id="9CXB"/>
<dbReference type="PDBsum" id="9CXC"/>
<dbReference type="EMDB" id="EMD-45884"/>
<dbReference type="EMDB" id="EMD-45890"/>
<dbReference type="EMDB" id="EMD-45894"/>
<dbReference type="EMDB" id="EMD-45908"/>
<dbReference type="EMDB" id="EMD-45920"/>
<dbReference type="EMDB" id="EMD-45980"/>
<dbReference type="EMDB" id="EMD-45984"/>
<dbReference type="EMDB" id="EMD-45985"/>
<dbReference type="SMR" id="P47869"/>
<dbReference type="BioGRID" id="108829">
    <property type="interactions" value="4"/>
</dbReference>
<dbReference type="ComplexPortal" id="CPX-2174">
    <property type="entry name" value="GABA-A receptor, alpha2-beta3-gamma2"/>
</dbReference>
<dbReference type="ComplexPortal" id="CPX-8577">
    <property type="entry name" value="GABA-A receptor, alpha2-beta2-gamma2"/>
</dbReference>
<dbReference type="ComplexPortal" id="CPX-8702">
    <property type="entry name" value="GABA-A receptor, alpha2-beta1-gamma2 complex"/>
</dbReference>
<dbReference type="FunCoup" id="P47869">
    <property type="interactions" value="640"/>
</dbReference>
<dbReference type="IntAct" id="P47869">
    <property type="interactions" value="3"/>
</dbReference>
<dbReference type="MINT" id="P47869"/>
<dbReference type="STRING" id="9606.ENSP00000427603"/>
<dbReference type="BindingDB" id="P47869"/>
<dbReference type="ChEMBL" id="CHEMBL4956"/>
<dbReference type="DrugBank" id="DB12537">
    <property type="generic name" value="1,2-Benzodiazepine"/>
</dbReference>
<dbReference type="DrugBank" id="DB00546">
    <property type="generic name" value="Adinazolam"/>
</dbReference>
<dbReference type="DrugBank" id="DB06579">
    <property type="generic name" value="Adipiplon"/>
</dbReference>
<dbReference type="DrugBank" id="DB00404">
    <property type="generic name" value="Alprazolam"/>
</dbReference>
<dbReference type="DrugBank" id="DB01351">
    <property type="generic name" value="Amobarbital"/>
</dbReference>
<dbReference type="DrugBank" id="DB00543">
    <property type="generic name" value="Amoxapine"/>
</dbReference>
<dbReference type="DrugBank" id="DB11901">
    <property type="generic name" value="Apalutamide"/>
</dbReference>
<dbReference type="DrugBank" id="DB01352">
    <property type="generic name" value="Aprobarbital"/>
</dbReference>
<dbReference type="DrugBank" id="DB13994">
    <property type="generic name" value="AZD-7325"/>
</dbReference>
<dbReference type="DrugBank" id="DB01483">
    <property type="generic name" value="Barbital"/>
</dbReference>
<dbReference type="DrugBank" id="DB14719">
    <property type="generic name" value="Bentazepam"/>
</dbReference>
<dbReference type="DrugBank" id="DB11859">
    <property type="generic name" value="Brexanolone"/>
</dbReference>
<dbReference type="DrugBank" id="DB01558">
    <property type="generic name" value="Bromazepam"/>
</dbReference>
<dbReference type="DrugBank" id="DB09017">
    <property type="generic name" value="Brotizolam"/>
</dbReference>
<dbReference type="DrugBank" id="DB00237">
    <property type="generic name" value="Butabarbital"/>
</dbReference>
<dbReference type="DrugBank" id="DB00241">
    <property type="generic name" value="Butalbital"/>
</dbReference>
<dbReference type="DrugBank" id="DB01353">
    <property type="generic name" value="Butobarbital"/>
</dbReference>
<dbReference type="DrugBank" id="DB01489">
    <property type="generic name" value="Camazepam"/>
</dbReference>
<dbReference type="DrugBank" id="DB00475">
    <property type="generic name" value="Chlordiazepoxide"/>
</dbReference>
<dbReference type="DrugBank" id="DB14715">
    <property type="generic name" value="Cinazepam"/>
</dbReference>
<dbReference type="DrugBank" id="DB01594">
    <property type="generic name" value="Cinolazepam"/>
</dbReference>
<dbReference type="DrugBank" id="DB00349">
    <property type="generic name" value="Clobazam"/>
</dbReference>
<dbReference type="DrugBank" id="DB01068">
    <property type="generic name" value="Clonazepam"/>
</dbReference>
<dbReference type="DrugBank" id="DB00628">
    <property type="generic name" value="Clorazepic acid"/>
</dbReference>
<dbReference type="DrugBank" id="DB01559">
    <property type="generic name" value="Clotiazepam"/>
</dbReference>
<dbReference type="DrugBank" id="DB01553">
    <property type="generic name" value="Cloxazolam"/>
</dbReference>
<dbReference type="DrugBank" id="DB01511">
    <property type="generic name" value="Delorazepam"/>
</dbReference>
<dbReference type="DrugBank" id="DB01189">
    <property type="generic name" value="Desflurane"/>
</dbReference>
<dbReference type="DrugBank" id="DB00829">
    <property type="generic name" value="Diazepam"/>
</dbReference>
<dbReference type="DrugBank" id="DB01496">
    <property type="generic name" value="Dihydro-2-thioxo-5-((5-(2-(trifluoromethyl)phenyl)-2-furanyl)methyl)-4,6(1H,5H)-pyrimidinedione"/>
</dbReference>
<dbReference type="DrugBank" id="DB13837">
    <property type="generic name" value="Doxefazepam"/>
</dbReference>
<dbReference type="DrugBank" id="DB00228">
    <property type="generic name" value="Enflurane"/>
</dbReference>
<dbReference type="DrugBank" id="DB01215">
    <property type="generic name" value="Estazolam"/>
</dbReference>
<dbReference type="DrugBank" id="DB00402">
    <property type="generic name" value="Eszopiclone"/>
</dbReference>
<dbReference type="DrugBank" id="DB00898">
    <property type="generic name" value="Ethanol"/>
</dbReference>
<dbReference type="DrugBank" id="DB00189">
    <property type="generic name" value="Ethchlorvynol"/>
</dbReference>
<dbReference type="DrugBank" id="DB01545">
    <property type="generic name" value="Ethyl loflazepate"/>
</dbReference>
<dbReference type="DrugBank" id="DB09166">
    <property type="generic name" value="Etizolam"/>
</dbReference>
<dbReference type="DrugBank" id="DB00292">
    <property type="generic name" value="Etomidate"/>
</dbReference>
<dbReference type="DrugBank" id="DB01567">
    <property type="generic name" value="Fludiazepam"/>
</dbReference>
<dbReference type="DrugBank" id="DB01205">
    <property type="generic name" value="Flumazenil"/>
</dbReference>
<dbReference type="DrugBank" id="DB01544">
    <property type="generic name" value="Flunitrazepam"/>
</dbReference>
<dbReference type="DrugBank" id="DB00690">
    <property type="generic name" value="Flurazepam"/>
</dbReference>
<dbReference type="DrugBank" id="DB02530">
    <property type="generic name" value="gamma-Aminobutyric acid"/>
</dbReference>
<dbReference type="DrugBank" id="DB05087">
    <property type="generic name" value="Ganaxolone"/>
</dbReference>
<dbReference type="DrugBank" id="DB01437">
    <property type="generic name" value="Glutethimide"/>
</dbReference>
<dbReference type="DrugBank" id="DB00801">
    <property type="generic name" value="Halazepam"/>
</dbReference>
<dbReference type="DrugBank" id="DB01159">
    <property type="generic name" value="Halothane"/>
</dbReference>
<dbReference type="DrugBank" id="DB01354">
    <property type="generic name" value="Heptabarbital"/>
</dbReference>
<dbReference type="DrugBank" id="DB01355">
    <property type="generic name" value="Hexobarbital"/>
</dbReference>
<dbReference type="DrugBank" id="DB00753">
    <property type="generic name" value="Isoflurane"/>
</dbReference>
<dbReference type="DrugBank" id="DB01587">
    <property type="generic name" value="Ketazolam"/>
</dbReference>
<dbReference type="DrugBank" id="DB00555">
    <property type="generic name" value="Lamotrigine"/>
</dbReference>
<dbReference type="DrugBank" id="DB13643">
    <property type="generic name" value="Loprazolam"/>
</dbReference>
<dbReference type="DrugBank" id="DB00186">
    <property type="generic name" value="Lorazepam"/>
</dbReference>
<dbReference type="DrugBank" id="DB13872">
    <property type="generic name" value="Lormetazepam"/>
</dbReference>
<dbReference type="DrugBank" id="DB13437">
    <property type="generic name" value="Medazepam"/>
</dbReference>
<dbReference type="DrugBank" id="DB00603">
    <property type="generic name" value="Medroxyprogesterone acetate"/>
</dbReference>
<dbReference type="DrugBank" id="DB01043">
    <property type="generic name" value="Memantine"/>
</dbReference>
<dbReference type="DrugBank" id="DB00371">
    <property type="generic name" value="Meprobamate"/>
</dbReference>
<dbReference type="DrugBank" id="DB00463">
    <property type="generic name" value="Metharbital"/>
</dbReference>
<dbReference type="DrugBank" id="DB01028">
    <property type="generic name" value="Methoxyflurane"/>
</dbReference>
<dbReference type="DrugBank" id="DB00849">
    <property type="generic name" value="Methylphenobarbital"/>
</dbReference>
<dbReference type="DrugBank" id="DB01107">
    <property type="generic name" value="Methyprylon"/>
</dbReference>
<dbReference type="DrugBank" id="DB15489">
    <property type="generic name" value="Mexazolam"/>
</dbReference>
<dbReference type="DrugBank" id="DB00683">
    <property type="generic name" value="Midazolam"/>
</dbReference>
<dbReference type="DrugBank" id="DB13993">
    <property type="generic name" value="MRK-409"/>
</dbReference>
<dbReference type="DrugBank" id="DB01595">
    <property type="generic name" value="Nitrazepam"/>
</dbReference>
<dbReference type="DrugBank" id="DB14028">
    <property type="generic name" value="Nordazepam"/>
</dbReference>
<dbReference type="DrugBank" id="DB00334">
    <property type="generic name" value="Olanzapine"/>
</dbReference>
<dbReference type="DrugBank" id="DB00842">
    <property type="generic name" value="Oxazepam"/>
</dbReference>
<dbReference type="DrugBank" id="DB14672">
    <property type="generic name" value="Oxazepam acetate"/>
</dbReference>
<dbReference type="DrugBank" id="DB04903">
    <property type="generic name" value="Pagoclone"/>
</dbReference>
<dbReference type="DrugBank" id="DB00312">
    <property type="generic name" value="Pentobarbital"/>
</dbReference>
<dbReference type="DrugBank" id="DB00252">
    <property type="generic name" value="Phenytoin"/>
</dbReference>
<dbReference type="DrugBank" id="DB13335">
    <property type="generic name" value="Pinazepam"/>
</dbReference>
<dbReference type="DrugBank" id="DB01708">
    <property type="generic name" value="Prasterone"/>
</dbReference>
<dbReference type="DrugBank" id="DB01588">
    <property type="generic name" value="Prazepam"/>
</dbReference>
<dbReference type="DrugBank" id="DB00794">
    <property type="generic name" value="Primidone"/>
</dbReference>
<dbReference type="DrugBank" id="DB00818">
    <property type="generic name" value="Propofol"/>
</dbReference>
<dbReference type="DrugBank" id="DB01589">
    <property type="generic name" value="Quazepam"/>
</dbReference>
<dbReference type="DrugBank" id="DB01346">
    <property type="generic name" value="Quinidine barbiturate"/>
</dbReference>
<dbReference type="DrugBank" id="DB12404">
    <property type="generic name" value="Remimazolam"/>
</dbReference>
<dbReference type="DrugBank" id="DB00418">
    <property type="generic name" value="Secobarbital"/>
</dbReference>
<dbReference type="DrugBank" id="DB01236">
    <property type="generic name" value="Sevoflurane"/>
</dbReference>
<dbReference type="DrugBank" id="DB09118">
    <property type="generic name" value="Stiripentol"/>
</dbReference>
<dbReference type="DrugBank" id="DB00306">
    <property type="generic name" value="Talbutal"/>
</dbReference>
<dbReference type="DrugBank" id="DB01956">
    <property type="generic name" value="Taurine"/>
</dbReference>
<dbReference type="DrugBank" id="DB00231">
    <property type="generic name" value="Temazepam"/>
</dbReference>
<dbReference type="DrugBank" id="DB11582">
    <property type="generic name" value="Thiocolchicoside"/>
</dbReference>
<dbReference type="DrugBank" id="DB00599">
    <property type="generic name" value="Thiopental"/>
</dbReference>
<dbReference type="DrugBank" id="DB00897">
    <property type="generic name" value="Triazolam"/>
</dbReference>
<dbReference type="DrugBank" id="DB00425">
    <property type="generic name" value="Zolpidem"/>
</dbReference>
<dbReference type="DrugBank" id="DB00909">
    <property type="generic name" value="Zonisamide"/>
</dbReference>
<dbReference type="DrugBank" id="DB01198">
    <property type="generic name" value="Zopiclone"/>
</dbReference>
<dbReference type="DrugBank" id="DB15490">
    <property type="generic name" value="Zuranolone"/>
</dbReference>
<dbReference type="DrugCentral" id="P47869"/>
<dbReference type="GuidetoPHARMACOLOGY" id="405"/>
<dbReference type="TCDB" id="1.A.9.5.2">
    <property type="family name" value="the neurotransmitter receptor, cys loop, ligand-gated ion channel (lic) family"/>
</dbReference>
<dbReference type="GlyCosmos" id="P47869">
    <property type="glycosylation" value="2 sites, No reported glycans"/>
</dbReference>
<dbReference type="GlyGen" id="P47869">
    <property type="glycosylation" value="2 sites"/>
</dbReference>
<dbReference type="iPTMnet" id="P47869"/>
<dbReference type="PhosphoSitePlus" id="P47869"/>
<dbReference type="BioMuta" id="GABRA2"/>
<dbReference type="DMDM" id="126302547"/>
<dbReference type="jPOST" id="P47869"/>
<dbReference type="MassIVE" id="P47869"/>
<dbReference type="PaxDb" id="9606-ENSP00000421828"/>
<dbReference type="PeptideAtlas" id="P47869"/>
<dbReference type="ProteomicsDB" id="55800">
    <molecule id="P47869-1"/>
</dbReference>
<dbReference type="ProteomicsDB" id="6330"/>
<dbReference type="Antibodypedia" id="12030">
    <property type="antibodies" value="344 antibodies from 33 providers"/>
</dbReference>
<dbReference type="DNASU" id="2555"/>
<dbReference type="Ensembl" id="ENST00000356504.5">
    <molecule id="P47869-1"/>
    <property type="protein sequence ID" value="ENSP00000348897.1"/>
    <property type="gene ID" value="ENSG00000151834.16"/>
</dbReference>
<dbReference type="Ensembl" id="ENST00000381620.9">
    <molecule id="P47869-1"/>
    <property type="protein sequence ID" value="ENSP00000371033.4"/>
    <property type="gene ID" value="ENSG00000151834.16"/>
</dbReference>
<dbReference type="Ensembl" id="ENST00000510861.5">
    <molecule id="P47869-1"/>
    <property type="protein sequence ID" value="ENSP00000421828.1"/>
    <property type="gene ID" value="ENSG00000151834.16"/>
</dbReference>
<dbReference type="Ensembl" id="ENST00000514090.5">
    <molecule id="P47869-1"/>
    <property type="protein sequence ID" value="ENSP00000421300.1"/>
    <property type="gene ID" value="ENSG00000151834.16"/>
</dbReference>
<dbReference type="GeneID" id="2555"/>
<dbReference type="KEGG" id="hsa:2555"/>
<dbReference type="MANE-Select" id="ENST00000381620.9">
    <property type="protein sequence ID" value="ENSP00000371033.4"/>
    <property type="RefSeq nucleotide sequence ID" value="NM_000807.4"/>
    <property type="RefSeq protein sequence ID" value="NP_000798.2"/>
</dbReference>
<dbReference type="UCSC" id="uc003gxc.5">
    <molecule id="P47869-1"/>
    <property type="organism name" value="human"/>
</dbReference>
<dbReference type="AGR" id="HGNC:4076"/>
<dbReference type="CTD" id="2555"/>
<dbReference type="DisGeNET" id="2555"/>
<dbReference type="GeneCards" id="GABRA2"/>
<dbReference type="HGNC" id="HGNC:4076">
    <property type="gene designation" value="GABRA2"/>
</dbReference>
<dbReference type="HPA" id="ENSG00000151834">
    <property type="expression patterns" value="Tissue enriched (brain)"/>
</dbReference>
<dbReference type="MalaCards" id="GABRA2"/>
<dbReference type="MIM" id="103780">
    <property type="type" value="phenotype"/>
</dbReference>
<dbReference type="MIM" id="137140">
    <property type="type" value="gene"/>
</dbReference>
<dbReference type="MIM" id="618557">
    <property type="type" value="phenotype"/>
</dbReference>
<dbReference type="neXtProt" id="NX_P47869"/>
<dbReference type="OpenTargets" id="ENSG00000151834"/>
<dbReference type="Orphanet" id="442835">
    <property type="disease" value="Non-specific early-onset epileptic encephalopathy"/>
</dbReference>
<dbReference type="PharmGKB" id="PA28490"/>
<dbReference type="VEuPathDB" id="HostDB:ENSG00000151834"/>
<dbReference type="eggNOG" id="KOG3642">
    <property type="taxonomic scope" value="Eukaryota"/>
</dbReference>
<dbReference type="GeneTree" id="ENSGT00940000157266"/>
<dbReference type="HOGENOM" id="CLU_010920_2_1_1"/>
<dbReference type="InParanoid" id="P47869"/>
<dbReference type="OMA" id="AXSITEV"/>
<dbReference type="OrthoDB" id="203862at2759"/>
<dbReference type="PAN-GO" id="P47869">
    <property type="GO annotations" value="18 GO annotations based on evolutionary models"/>
</dbReference>
<dbReference type="PhylomeDB" id="P47869"/>
<dbReference type="TreeFam" id="TF315453"/>
<dbReference type="PathwayCommons" id="P47869"/>
<dbReference type="Reactome" id="R-HSA-977443">
    <property type="pathway name" value="GABA receptor activation"/>
</dbReference>
<dbReference type="SignaLink" id="P47869"/>
<dbReference type="SIGNOR" id="P47869"/>
<dbReference type="BioGRID-ORCS" id="2555">
    <property type="hits" value="16 hits in 1160 CRISPR screens"/>
</dbReference>
<dbReference type="ChiTaRS" id="GABRA2">
    <property type="organism name" value="human"/>
</dbReference>
<dbReference type="GeneWiki" id="GABRA2"/>
<dbReference type="GenomeRNAi" id="2555"/>
<dbReference type="Pharos" id="P47869">
    <property type="development level" value="Tclin"/>
</dbReference>
<dbReference type="PRO" id="PR:P47869"/>
<dbReference type="Proteomes" id="UP000005640">
    <property type="component" value="Chromosome 4"/>
</dbReference>
<dbReference type="RNAct" id="P47869">
    <property type="molecule type" value="protein"/>
</dbReference>
<dbReference type="Bgee" id="ENSG00000151834">
    <property type="expression patterns" value="Expressed in frontal pole and 138 other cell types or tissues"/>
</dbReference>
<dbReference type="ExpressionAtlas" id="P47869">
    <property type="expression patterns" value="baseline and differential"/>
</dbReference>
<dbReference type="GO" id="GO:0030424">
    <property type="term" value="C:axon"/>
    <property type="evidence" value="ECO:0007669"/>
    <property type="project" value="Ensembl"/>
</dbReference>
<dbReference type="GO" id="GO:0034707">
    <property type="term" value="C:chloride channel complex"/>
    <property type="evidence" value="ECO:0007669"/>
    <property type="project" value="UniProtKB-KW"/>
</dbReference>
<dbReference type="GO" id="GO:0032590">
    <property type="term" value="C:dendrite membrane"/>
    <property type="evidence" value="ECO:0000318"/>
    <property type="project" value="GO_Central"/>
</dbReference>
<dbReference type="GO" id="GO:1902711">
    <property type="term" value="C:GABA-A receptor complex"/>
    <property type="evidence" value="ECO:0000314"/>
    <property type="project" value="GO_Central"/>
</dbReference>
<dbReference type="GO" id="GO:0098982">
    <property type="term" value="C:GABA-ergic synapse"/>
    <property type="evidence" value="ECO:0007669"/>
    <property type="project" value="Ensembl"/>
</dbReference>
<dbReference type="GO" id="GO:0060077">
    <property type="term" value="C:inhibitory synapse"/>
    <property type="evidence" value="ECO:0007669"/>
    <property type="project" value="Ensembl"/>
</dbReference>
<dbReference type="GO" id="GO:0043025">
    <property type="term" value="C:neuronal cell body"/>
    <property type="evidence" value="ECO:0007669"/>
    <property type="project" value="Ensembl"/>
</dbReference>
<dbReference type="GO" id="GO:0005886">
    <property type="term" value="C:plasma membrane"/>
    <property type="evidence" value="ECO:0000304"/>
    <property type="project" value="Reactome"/>
</dbReference>
<dbReference type="GO" id="GO:0098794">
    <property type="term" value="C:postsynapse"/>
    <property type="evidence" value="ECO:0000318"/>
    <property type="project" value="GO_Central"/>
</dbReference>
<dbReference type="GO" id="GO:0099634">
    <property type="term" value="C:postsynaptic specialization membrane"/>
    <property type="evidence" value="ECO:0007669"/>
    <property type="project" value="Ensembl"/>
</dbReference>
<dbReference type="GO" id="GO:0030672">
    <property type="term" value="C:synaptic vesicle membrane"/>
    <property type="evidence" value="ECO:0000314"/>
    <property type="project" value="UniProtKB"/>
</dbReference>
<dbReference type="GO" id="GO:0008503">
    <property type="term" value="F:benzodiazepine receptor activity"/>
    <property type="evidence" value="ECO:0000315"/>
    <property type="project" value="UniProtKB"/>
</dbReference>
<dbReference type="GO" id="GO:0004890">
    <property type="term" value="F:GABA-A receptor activity"/>
    <property type="evidence" value="ECO:0007669"/>
    <property type="project" value="InterPro"/>
</dbReference>
<dbReference type="GO" id="GO:0022851">
    <property type="term" value="F:GABA-gated chloride ion channel activity"/>
    <property type="evidence" value="ECO:0000314"/>
    <property type="project" value="GO_Central"/>
</dbReference>
<dbReference type="GO" id="GO:0099507">
    <property type="term" value="F:ligand-gated monoatomic ion channel activity involved in regulation of presynaptic membrane potential"/>
    <property type="evidence" value="ECO:0000314"/>
    <property type="project" value="SynGO"/>
</dbReference>
<dbReference type="GO" id="GO:1904315">
    <property type="term" value="F:transmitter-gated monoatomic ion channel activity involved in regulation of postsynaptic membrane potential"/>
    <property type="evidence" value="ECO:0000314"/>
    <property type="project" value="SynGO"/>
</dbReference>
<dbReference type="GO" id="GO:1902476">
    <property type="term" value="P:chloride transmembrane transport"/>
    <property type="evidence" value="ECO:0000314"/>
    <property type="project" value="GO_Central"/>
</dbReference>
<dbReference type="GO" id="GO:0007214">
    <property type="term" value="P:gamma-aminobutyric acid signaling pathway"/>
    <property type="evidence" value="ECO:0000315"/>
    <property type="project" value="UniProtKB"/>
</dbReference>
<dbReference type="GO" id="GO:1904862">
    <property type="term" value="P:inhibitory synapse assembly"/>
    <property type="evidence" value="ECO:0000250"/>
    <property type="project" value="UniProtKB"/>
</dbReference>
<dbReference type="GO" id="GO:0051932">
    <property type="term" value="P:synaptic transmission, GABAergic"/>
    <property type="evidence" value="ECO:0000318"/>
    <property type="project" value="GO_Central"/>
</dbReference>
<dbReference type="CDD" id="cd19035">
    <property type="entry name" value="LGIC_ECD_GABAAR_A2"/>
    <property type="match status" value="1"/>
</dbReference>
<dbReference type="CDD" id="cd19052">
    <property type="entry name" value="LGIC_TM_GABAAR_alpha"/>
    <property type="match status" value="1"/>
</dbReference>
<dbReference type="FunFam" id="2.70.170.10:FF:000001">
    <property type="entry name" value="Gamma-aminobutyric acid A receptor subunit alpha-2"/>
    <property type="match status" value="1"/>
</dbReference>
<dbReference type="FunFam" id="1.20.58.390:FF:000002">
    <property type="entry name" value="Putative gamma-aminobutyric acid receptor subunit alpha-5"/>
    <property type="match status" value="1"/>
</dbReference>
<dbReference type="Gene3D" id="2.70.170.10">
    <property type="entry name" value="Neurotransmitter-gated ion-channel ligand-binding domain"/>
    <property type="match status" value="1"/>
</dbReference>
<dbReference type="Gene3D" id="1.20.58.390">
    <property type="entry name" value="Neurotransmitter-gated ion-channel transmembrane domain"/>
    <property type="match status" value="1"/>
</dbReference>
<dbReference type="InterPro" id="IPR006028">
    <property type="entry name" value="GABAA/Glycine_rcpt"/>
</dbReference>
<dbReference type="InterPro" id="IPR001390">
    <property type="entry name" value="GABAAa_rcpt"/>
</dbReference>
<dbReference type="InterPro" id="IPR005432">
    <property type="entry name" value="GABBAa2_rcpt"/>
</dbReference>
<dbReference type="InterPro" id="IPR047024">
    <property type="entry name" value="Gabra-1-6_TM"/>
</dbReference>
<dbReference type="InterPro" id="IPR047023">
    <property type="entry name" value="Gabra-2_ECD"/>
</dbReference>
<dbReference type="InterPro" id="IPR006202">
    <property type="entry name" value="Neur_chan_lig-bd"/>
</dbReference>
<dbReference type="InterPro" id="IPR036734">
    <property type="entry name" value="Neur_chan_lig-bd_sf"/>
</dbReference>
<dbReference type="InterPro" id="IPR006201">
    <property type="entry name" value="Neur_channel"/>
</dbReference>
<dbReference type="InterPro" id="IPR036719">
    <property type="entry name" value="Neuro-gated_channel_TM_sf"/>
</dbReference>
<dbReference type="InterPro" id="IPR038050">
    <property type="entry name" value="Neuro_actylchol_rec"/>
</dbReference>
<dbReference type="InterPro" id="IPR006029">
    <property type="entry name" value="Neurotrans-gated_channel_TM"/>
</dbReference>
<dbReference type="InterPro" id="IPR018000">
    <property type="entry name" value="Neurotransmitter_ion_chnl_CS"/>
</dbReference>
<dbReference type="NCBIfam" id="TIGR00860">
    <property type="entry name" value="LIC"/>
    <property type="match status" value="1"/>
</dbReference>
<dbReference type="PANTHER" id="PTHR18945">
    <property type="entry name" value="NEUROTRANSMITTER GATED ION CHANNEL"/>
    <property type="match status" value="1"/>
</dbReference>
<dbReference type="Pfam" id="PF02931">
    <property type="entry name" value="Neur_chan_LBD"/>
    <property type="match status" value="1"/>
</dbReference>
<dbReference type="Pfam" id="PF02932">
    <property type="entry name" value="Neur_chan_memb"/>
    <property type="match status" value="2"/>
</dbReference>
<dbReference type="PRINTS" id="PR01079">
    <property type="entry name" value="GABAARALPHA"/>
</dbReference>
<dbReference type="PRINTS" id="PR01615">
    <property type="entry name" value="GABAARALPHA2"/>
</dbReference>
<dbReference type="PRINTS" id="PR00253">
    <property type="entry name" value="GABAARECEPTR"/>
</dbReference>
<dbReference type="PRINTS" id="PR00252">
    <property type="entry name" value="NRIONCHANNEL"/>
</dbReference>
<dbReference type="SUPFAM" id="SSF90112">
    <property type="entry name" value="Neurotransmitter-gated ion-channel transmembrane pore"/>
    <property type="match status" value="1"/>
</dbReference>
<dbReference type="SUPFAM" id="SSF63712">
    <property type="entry name" value="Nicotinic receptor ligand binding domain-like"/>
    <property type="match status" value="1"/>
</dbReference>
<dbReference type="PROSITE" id="PS00236">
    <property type="entry name" value="NEUROTR_ION_CHANNEL"/>
    <property type="match status" value="1"/>
</dbReference>
<reference key="1">
    <citation type="journal article" date="1993" name="Mol. Pharmacol.">
        <title>Cloning of cDNA sequences encoding human alpha 2 and alpha 3 gamma-aminobutyric acidA receptor subunits and characterization of the benzodiazepine pharmacology of recombinant alpha 1-, alpha 2-, alpha 3-, and alpha 5-containing human gamma-aminobutyric acidA receptors.</title>
        <authorList>
            <person name="Hadingham K.L."/>
            <person name="Wingrove P."/>
            <person name="le Bourdelles B."/>
            <person name="Palmer K.J."/>
            <person name="Ragan C.I."/>
            <person name="Whiting P.J."/>
        </authorList>
    </citation>
    <scope>NUCLEOTIDE SEQUENCE [MRNA] (ISOFORM 1)</scope>
    <source>
        <tissue>Brain</tissue>
    </source>
</reference>
<reference key="2">
    <citation type="journal article" date="2005" name="Nature">
        <title>Generation and annotation of the DNA sequences of human chromosomes 2 and 4.</title>
        <authorList>
            <person name="Hillier L.W."/>
            <person name="Graves T.A."/>
            <person name="Fulton R.S."/>
            <person name="Fulton L.A."/>
            <person name="Pepin K.H."/>
            <person name="Minx P."/>
            <person name="Wagner-McPherson C."/>
            <person name="Layman D."/>
            <person name="Wylie K."/>
            <person name="Sekhon M."/>
            <person name="Becker M.C."/>
            <person name="Fewell G.A."/>
            <person name="Delehaunty K.D."/>
            <person name="Miner T.L."/>
            <person name="Nash W.E."/>
            <person name="Kremitzki C."/>
            <person name="Oddy L."/>
            <person name="Du H."/>
            <person name="Sun H."/>
            <person name="Bradshaw-Cordum H."/>
            <person name="Ali J."/>
            <person name="Carter J."/>
            <person name="Cordes M."/>
            <person name="Harris A."/>
            <person name="Isak A."/>
            <person name="van Brunt A."/>
            <person name="Nguyen C."/>
            <person name="Du F."/>
            <person name="Courtney L."/>
            <person name="Kalicki J."/>
            <person name="Ozersky P."/>
            <person name="Abbott S."/>
            <person name="Armstrong J."/>
            <person name="Belter E.A."/>
            <person name="Caruso L."/>
            <person name="Cedroni M."/>
            <person name="Cotton M."/>
            <person name="Davidson T."/>
            <person name="Desai A."/>
            <person name="Elliott G."/>
            <person name="Erb T."/>
            <person name="Fronick C."/>
            <person name="Gaige T."/>
            <person name="Haakenson W."/>
            <person name="Haglund K."/>
            <person name="Holmes A."/>
            <person name="Harkins R."/>
            <person name="Kim K."/>
            <person name="Kruchowski S.S."/>
            <person name="Strong C.M."/>
            <person name="Grewal N."/>
            <person name="Goyea E."/>
            <person name="Hou S."/>
            <person name="Levy A."/>
            <person name="Martinka S."/>
            <person name="Mead K."/>
            <person name="McLellan M.D."/>
            <person name="Meyer R."/>
            <person name="Randall-Maher J."/>
            <person name="Tomlinson C."/>
            <person name="Dauphin-Kohlberg S."/>
            <person name="Kozlowicz-Reilly A."/>
            <person name="Shah N."/>
            <person name="Swearengen-Shahid S."/>
            <person name="Snider J."/>
            <person name="Strong J.T."/>
            <person name="Thompson J."/>
            <person name="Yoakum M."/>
            <person name="Leonard S."/>
            <person name="Pearman C."/>
            <person name="Trani L."/>
            <person name="Radionenko M."/>
            <person name="Waligorski J.E."/>
            <person name="Wang C."/>
            <person name="Rock S.M."/>
            <person name="Tin-Wollam A.-M."/>
            <person name="Maupin R."/>
            <person name="Latreille P."/>
            <person name="Wendl M.C."/>
            <person name="Yang S.-P."/>
            <person name="Pohl C."/>
            <person name="Wallis J.W."/>
            <person name="Spieth J."/>
            <person name="Bieri T.A."/>
            <person name="Berkowicz N."/>
            <person name="Nelson J.O."/>
            <person name="Osborne J."/>
            <person name="Ding L."/>
            <person name="Meyer R."/>
            <person name="Sabo A."/>
            <person name="Shotland Y."/>
            <person name="Sinha P."/>
            <person name="Wohldmann P.E."/>
            <person name="Cook L.L."/>
            <person name="Hickenbotham M.T."/>
            <person name="Eldred J."/>
            <person name="Williams D."/>
            <person name="Jones T.A."/>
            <person name="She X."/>
            <person name="Ciccarelli F.D."/>
            <person name="Izaurralde E."/>
            <person name="Taylor J."/>
            <person name="Schmutz J."/>
            <person name="Myers R.M."/>
            <person name="Cox D.R."/>
            <person name="Huang X."/>
            <person name="McPherson J.D."/>
            <person name="Mardis E.R."/>
            <person name="Clifton S.W."/>
            <person name="Warren W.C."/>
            <person name="Chinwalla A.T."/>
            <person name="Eddy S.R."/>
            <person name="Marra M.A."/>
            <person name="Ovcharenko I."/>
            <person name="Furey T.S."/>
            <person name="Miller W."/>
            <person name="Eichler E.E."/>
            <person name="Bork P."/>
            <person name="Suyama M."/>
            <person name="Torrents D."/>
            <person name="Waterston R.H."/>
            <person name="Wilson R.K."/>
        </authorList>
    </citation>
    <scope>NUCLEOTIDE SEQUENCE [LARGE SCALE GENOMIC DNA]</scope>
</reference>
<reference key="3">
    <citation type="journal article" date="2004" name="Nat. Genet.">
        <title>Complete sequencing and characterization of 21,243 full-length human cDNAs.</title>
        <authorList>
            <person name="Ota T."/>
            <person name="Suzuki Y."/>
            <person name="Nishikawa T."/>
            <person name="Otsuki T."/>
            <person name="Sugiyama T."/>
            <person name="Irie R."/>
            <person name="Wakamatsu A."/>
            <person name="Hayashi K."/>
            <person name="Sato H."/>
            <person name="Nagai K."/>
            <person name="Kimura K."/>
            <person name="Makita H."/>
            <person name="Sekine M."/>
            <person name="Obayashi M."/>
            <person name="Nishi T."/>
            <person name="Shibahara T."/>
            <person name="Tanaka T."/>
            <person name="Ishii S."/>
            <person name="Yamamoto J."/>
            <person name="Saito K."/>
            <person name="Kawai Y."/>
            <person name="Isono Y."/>
            <person name="Nakamura Y."/>
            <person name="Nagahari K."/>
            <person name="Murakami K."/>
            <person name="Yasuda T."/>
            <person name="Iwayanagi T."/>
            <person name="Wagatsuma M."/>
            <person name="Shiratori A."/>
            <person name="Sudo H."/>
            <person name="Hosoiri T."/>
            <person name="Kaku Y."/>
            <person name="Kodaira H."/>
            <person name="Kondo H."/>
            <person name="Sugawara M."/>
            <person name="Takahashi M."/>
            <person name="Kanda K."/>
            <person name="Yokoi T."/>
            <person name="Furuya T."/>
            <person name="Kikkawa E."/>
            <person name="Omura Y."/>
            <person name="Abe K."/>
            <person name="Kamihara K."/>
            <person name="Katsuta N."/>
            <person name="Sato K."/>
            <person name="Tanikawa M."/>
            <person name="Yamazaki M."/>
            <person name="Ninomiya K."/>
            <person name="Ishibashi T."/>
            <person name="Yamashita H."/>
            <person name="Murakawa K."/>
            <person name="Fujimori K."/>
            <person name="Tanai H."/>
            <person name="Kimata M."/>
            <person name="Watanabe M."/>
            <person name="Hiraoka S."/>
            <person name="Chiba Y."/>
            <person name="Ishida S."/>
            <person name="Ono Y."/>
            <person name="Takiguchi S."/>
            <person name="Watanabe S."/>
            <person name="Yosida M."/>
            <person name="Hotuta T."/>
            <person name="Kusano J."/>
            <person name="Kanehori K."/>
            <person name="Takahashi-Fujii A."/>
            <person name="Hara H."/>
            <person name="Tanase T.-O."/>
            <person name="Nomura Y."/>
            <person name="Togiya S."/>
            <person name="Komai F."/>
            <person name="Hara R."/>
            <person name="Takeuchi K."/>
            <person name="Arita M."/>
            <person name="Imose N."/>
            <person name="Musashino K."/>
            <person name="Yuuki H."/>
            <person name="Oshima A."/>
            <person name="Sasaki N."/>
            <person name="Aotsuka S."/>
            <person name="Yoshikawa Y."/>
            <person name="Matsunawa H."/>
            <person name="Ichihara T."/>
            <person name="Shiohata N."/>
            <person name="Sano S."/>
            <person name="Moriya S."/>
            <person name="Momiyama H."/>
            <person name="Satoh N."/>
            <person name="Takami S."/>
            <person name="Terashima Y."/>
            <person name="Suzuki O."/>
            <person name="Nakagawa S."/>
            <person name="Senoh A."/>
            <person name="Mizoguchi H."/>
            <person name="Goto Y."/>
            <person name="Shimizu F."/>
            <person name="Wakebe H."/>
            <person name="Hishigaki H."/>
            <person name="Watanabe T."/>
            <person name="Sugiyama A."/>
            <person name="Takemoto M."/>
            <person name="Kawakami B."/>
            <person name="Yamazaki M."/>
            <person name="Watanabe K."/>
            <person name="Kumagai A."/>
            <person name="Itakura S."/>
            <person name="Fukuzumi Y."/>
            <person name="Fujimori Y."/>
            <person name="Komiyama M."/>
            <person name="Tashiro H."/>
            <person name="Tanigami A."/>
            <person name="Fujiwara T."/>
            <person name="Ono T."/>
            <person name="Yamada K."/>
            <person name="Fujii Y."/>
            <person name="Ozaki K."/>
            <person name="Hirao M."/>
            <person name="Ohmori Y."/>
            <person name="Kawabata A."/>
            <person name="Hikiji T."/>
            <person name="Kobatake N."/>
            <person name="Inagaki H."/>
            <person name="Ikema Y."/>
            <person name="Okamoto S."/>
            <person name="Okitani R."/>
            <person name="Kawakami T."/>
            <person name="Noguchi S."/>
            <person name="Itoh T."/>
            <person name="Shigeta K."/>
            <person name="Senba T."/>
            <person name="Matsumura K."/>
            <person name="Nakajima Y."/>
            <person name="Mizuno T."/>
            <person name="Morinaga M."/>
            <person name="Sasaki M."/>
            <person name="Togashi T."/>
            <person name="Oyama M."/>
            <person name="Hata H."/>
            <person name="Watanabe M."/>
            <person name="Komatsu T."/>
            <person name="Mizushima-Sugano J."/>
            <person name="Satoh T."/>
            <person name="Shirai Y."/>
            <person name="Takahashi Y."/>
            <person name="Nakagawa K."/>
            <person name="Okumura K."/>
            <person name="Nagase T."/>
            <person name="Nomura N."/>
            <person name="Kikuchi H."/>
            <person name="Masuho Y."/>
            <person name="Yamashita R."/>
            <person name="Nakai K."/>
            <person name="Yada T."/>
            <person name="Nakamura Y."/>
            <person name="Ohara O."/>
            <person name="Isogai T."/>
            <person name="Sugano S."/>
        </authorList>
    </citation>
    <scope>NUCLEOTIDE SEQUENCE [LARGE SCALE MRNA] (ISOFORMS 1 AND 2)</scope>
    <source>
        <tissue>Amygdala</tissue>
        <tissue>Brain</tissue>
        <tissue>Cerebellum</tissue>
    </source>
</reference>
<reference key="4">
    <citation type="submission" date="2005-03" db="EMBL/GenBank/DDBJ databases">
        <authorList>
            <person name="Totoki Y."/>
            <person name="Toyoda A."/>
            <person name="Takeda T."/>
            <person name="Sakaki Y."/>
            <person name="Tanaka A."/>
            <person name="Yokoyama S."/>
            <person name="Ohara O."/>
            <person name="Nagase T."/>
            <person name="Kikuno R.F."/>
        </authorList>
    </citation>
    <scope>NUCLEOTIDE SEQUENCE [LARGE SCALE MRNA] (ISOFORM 1)</scope>
    <source>
        <tissue>Brain</tissue>
    </source>
</reference>
<reference key="5">
    <citation type="submission" date="2005-07" db="EMBL/GenBank/DDBJ databases">
        <authorList>
            <person name="Mural R.J."/>
            <person name="Istrail S."/>
            <person name="Sutton G."/>
            <person name="Florea L."/>
            <person name="Halpern A.L."/>
            <person name="Mobarry C.M."/>
            <person name="Lippert R."/>
            <person name="Walenz B."/>
            <person name="Shatkay H."/>
            <person name="Dew I."/>
            <person name="Miller J.R."/>
            <person name="Flanigan M.J."/>
            <person name="Edwards N.J."/>
            <person name="Bolanos R."/>
            <person name="Fasulo D."/>
            <person name="Halldorsson B.V."/>
            <person name="Hannenhalli S."/>
            <person name="Turner R."/>
            <person name="Yooseph S."/>
            <person name="Lu F."/>
            <person name="Nusskern D.R."/>
            <person name="Shue B.C."/>
            <person name="Zheng X.H."/>
            <person name="Zhong F."/>
            <person name="Delcher A.L."/>
            <person name="Huson D.H."/>
            <person name="Kravitz S.A."/>
            <person name="Mouchard L."/>
            <person name="Reinert K."/>
            <person name="Remington K.A."/>
            <person name="Clark A.G."/>
            <person name="Waterman M.S."/>
            <person name="Eichler E.E."/>
            <person name="Adams M.D."/>
            <person name="Hunkapiller M.W."/>
            <person name="Myers E.W."/>
            <person name="Venter J.C."/>
        </authorList>
    </citation>
    <scope>NUCLEOTIDE SEQUENCE [LARGE SCALE GENOMIC DNA]</scope>
</reference>
<reference key="6">
    <citation type="journal article" date="1999" name="Proc. Natl. Acad. Sci. U.S.A.">
        <title>Theta, a novel gamma-aminobutyric acid type A receptor subunit.</title>
        <authorList>
            <person name="Bonnert T.P."/>
            <person name="McKernan R.M."/>
            <person name="Farrar S."/>
            <person name="le Bourdelles B."/>
            <person name="Heavens R.P."/>
            <person name="Smith D.W."/>
            <person name="Hewson L."/>
            <person name="Rigby M.R."/>
            <person name="Sirinathsinghji D.J.S."/>
            <person name="Brown N."/>
            <person name="Wafford K.A."/>
            <person name="Whiting P.J."/>
        </authorList>
    </citation>
    <scope>FUNCTION</scope>
    <scope>TRANSPORTER ACTIVITY</scope>
    <scope>INTERACTION WITH GABRB1; GABRG1 AND GABRQ</scope>
</reference>
<reference key="7">
    <citation type="journal article" date="2004" name="Am. J. Hum. Genet.">
        <title>Variations in GABRA2, encoding the alpha 2 subunit of the GABA(A) receptor, are associated with alcohol dependence and with brain oscillations.</title>
        <authorList>
            <person name="Edenberg H.J."/>
            <person name="Dick D.M."/>
            <person name="Xuei X."/>
            <person name="Tian H."/>
            <person name="Almasy L."/>
            <person name="Bauer L.O."/>
            <person name="Crowe R.R."/>
            <person name="Goate A."/>
            <person name="Hesselbrock V."/>
            <person name="Jones K."/>
            <person name="Kwon J."/>
            <person name="Li T.-K."/>
            <person name="Nurnberger J.I. Jr."/>
            <person name="O'Connor S.J."/>
            <person name="Reich T."/>
            <person name="Rice J."/>
            <person name="Schuckit M.A."/>
            <person name="Porjesz B."/>
            <person name="Foroud T."/>
            <person name="Begleiter H."/>
        </authorList>
    </citation>
    <scope>INVOLVEMENT IN SUSCEPTIBILITY TO ALCOHOLISM</scope>
</reference>
<reference key="8">
    <citation type="journal article" date="2018" name="Brain">
        <title>De novo variants in GABRA2 and GABRA5 alter receptor function and contribute to early-onset epilepsy.</title>
        <authorList>
            <person name="Butler K.M."/>
            <person name="Moody O.A."/>
            <person name="Schuler E."/>
            <person name="Coryell J."/>
            <person name="Alexander J.J."/>
            <person name="Jenkins A."/>
            <person name="Escayg A."/>
        </authorList>
    </citation>
    <scope>FUNCTION</scope>
    <scope>INVOLVEMENT IN DEE78</scope>
    <scope>VARIANT DEE78 LYS-292</scope>
    <scope>CHARACTERIZATION OF VARIANT DEE78 LYS-292</scope>
    <scope>VARIANT LYS-377</scope>
</reference>
<reference key="9">
    <citation type="journal article" date="2018" name="Eur. J. Paediatr. Neurol.">
        <title>A de novo GABRA2 missense mutation in severe early-onset epileptic encephalopathy with a choreiform movement disorder.</title>
        <authorList>
            <person name="Orenstein N."/>
            <person name="Goldberg-Stern H."/>
            <person name="Straussberg R."/>
            <person name="Bazak L."/>
            <person name="Weisz Hubshman M."/>
            <person name="Kropach N."/>
            <person name="Gilad O."/>
            <person name="Scheuerman O."/>
            <person name="Dory Y."/>
            <person name="Kraus D."/>
            <person name="Tzur S."/>
            <person name="Magal N."/>
            <person name="Kilim Y."/>
            <person name="Shkalim Zemer V."/>
            <person name="Basel-Salmon L."/>
        </authorList>
    </citation>
    <scope>INVOLVEMENT IN DEE78</scope>
    <scope>VARIANT DEE78 HIS-335</scope>
</reference>
<reference key="10">
    <citation type="journal article" date="2019" name="Brain">
        <title>Novel GABRA2 variants in epileptic encephalopathy and intellectual disability with seizures.</title>
        <authorList>
            <person name="Maljevic S."/>
            <person name="Keren B."/>
            <person name="Aung Y.H."/>
            <person name="Forster I.C."/>
            <person name="Mignot C."/>
            <person name="Buratti J."/>
            <person name="Lafitte A."/>
            <person name="Freihuber C."/>
            <person name="Rodan L.H."/>
            <person name="Bergin A."/>
            <person name="Hubert L."/>
            <person name="Poirier K."/>
            <person name="Munnich A."/>
            <person name="Besmond C."/>
            <person name="Hauser N."/>
            <person name="Miller R."/>
            <person name="McWalter K."/>
            <person name="Nabbout R."/>
            <person name="Heron D."/>
            <person name="Leguern E."/>
            <person name="Depienne C."/>
            <person name="Petrou S."/>
            <person name="Nava C."/>
        </authorList>
    </citation>
    <scope>FUNCTION</scope>
    <scope>INVOLVEMENT IN DEE78</scope>
    <scope>VARIANTS DEE78 THR-263; ALA-284; VAL-291 AND LEU-325</scope>
    <scope>CHARACTERIZATION OF VARIANTS DEE78 THR-263; ALA-284; VAL-291 AND LEU-325</scope>
</reference>
<sequence length="451" mass="51326">MKTKLNIYNMQFLLFVFLVWDPARLVLANIQEDEAKNNITIFTRILDRLLDGYDNRLRPGLGDSITEVFTNIYVTSFGPVSDTDMEYTIDVFFRQKWKDERLKFKGPMNILRLNNLMASKIWTPDTFFHNGKKSVAHNMTMPNKLLRIQDDGTLLYTMRLTVQAECPMHLEDFPMDAHSCPLKFGSYAYTTSEVTYIWTYNASDSVQVAPDGSRLNQYDLLGQSIGKETIKSSTGEYTVMTAHFHLKRKIGYFVIQTYLPCIMTVILSQVSFWLNRESVPARTVFGVTTVLTMTTLSISARNSLPKVAYATAMDWFIAVCYAFVFSALIEFATVNYFTKRGWAWDGKSVVNDKKKEKASVMIQNNAYAVAVANYAPNLSKDPVLSTISKSATTPEPNKKPENKPAEAKKTFNSVSKIDRMSRIVFPVLFGTFNLVYWATYLNREPVLGVSP</sequence>
<name>GBRA2_HUMAN</name>
<comment type="function">
    <text evidence="1 2 4 8 10 11">Alpha subunit of the heteropentameric ligand-gated chloride channel gated by gamma-aminobutyric acid (GABA), a major inhibitory neurotransmitter in the brain (PubMed:10449790, PubMed:29961870, PubMed:31032849). GABA-gated chloride channels, also named GABA(A) receptors (GABAAR), consist of five subunits arranged around a central pore and contain GABA active binding site(s) located at the alpha and beta subunit interfaces (By similarity). When activated by GABA, GABAARs selectively allow the flow of chloride anions across the cell membrane down their electrochemical gradient (PubMed:10449790). Chloride influx into the postsynaptic neuron following GABAAR opening decreases the neuron ability to generate a new action potential, thereby reducing nerve transmission (By similarity). The alpha-2 subunit exhibits synaptogenic activity together with beta-2 and very little to no activity together with beta-3, the gamma-2 subunit being necessary but not sufficient to induce rapid synaptic contacts formation (By similarity).</text>
</comment>
<comment type="catalytic activity">
    <reaction evidence="8">
        <text>chloride(in) = chloride(out)</text>
        <dbReference type="Rhea" id="RHEA:29823"/>
        <dbReference type="ChEBI" id="CHEBI:17996"/>
    </reaction>
</comment>
<comment type="activity regulation">
    <text evidence="1">Activated by pentobarbital (By similarity). Inhibited by the antagonist bicuculline (By similarity).</text>
</comment>
<comment type="subunit">
    <text evidence="3 4 8">Heteropentamer, formed by a combination of alpha (GABRA1-6), beta (GABRB1-3), gamma (GABRG1-3), delta (GABRD), epsilon (GABRE), rho (GABRR1-3), pi (GABRP) and theta (GABRQ) subunits, each subunit exhibiting distinct physiological and pharmacological properties (PubMed:10449790). Interacts with UBQLN1 (By similarity). Interacts with KIF21B (By similarity). Interacts with LHFPL4 (By similarity). Interacts with SHISA7; interaction leads to the regulation of GABA(A) receptor trafficking, channel deactivation kinetics and pharmacology (By similarity).</text>
</comment>
<comment type="interaction">
    <interactant intactId="EBI-2685723">
        <id>P47869</id>
    </interactant>
    <interactant intactId="EBI-297353">
        <id>P00533</id>
        <label>EGFR</label>
    </interactant>
    <organismsDiffer>false</organismsDiffer>
    <experiments>2</experiments>
</comment>
<comment type="subcellular location">
    <subcellularLocation>
        <location evidence="4">Postsynaptic cell membrane</location>
        <topology evidence="7">Multi-pass membrane protein</topology>
    </subcellularLocation>
    <subcellularLocation>
        <location evidence="4">Cell membrane</location>
        <topology evidence="7">Multi-pass membrane protein</topology>
    </subcellularLocation>
    <subcellularLocation>
        <location evidence="3">Cytoplasmic vesicle membrane</location>
    </subcellularLocation>
    <subcellularLocation>
        <location evidence="4">Cell projection</location>
        <location evidence="4">Dendrite</location>
    </subcellularLocation>
</comment>
<comment type="alternative products">
    <event type="alternative splicing"/>
    <isoform>
        <id>P47869-1</id>
        <name>1</name>
        <sequence type="displayed"/>
    </isoform>
    <isoform>
        <id>P47869-2</id>
        <name>2</name>
        <sequence type="described" ref="VSP_054277 VSP_054278"/>
    </isoform>
</comment>
<comment type="domain">
    <text evidence="4">The extracellular domain contributes to synaptic contact formation.</text>
</comment>
<comment type="domain">
    <text evidence="2">The GABA-binding pockets are located at the interface between neighboring alpha and beta subunits.</text>
</comment>
<comment type="domain">
    <text evidence="2">GABAARs subunits share a common topological structure: a peptide sequence made up of a long extracellular N-terminal, four transmembrane domains, intracellular or cytoplasmic domain located between the third and the fourth transmembrane domains.</text>
</comment>
<comment type="PTM">
    <text evidence="4">Glycosylated.</text>
</comment>
<comment type="polymorphism">
    <text>Genetic variations in GABRA2 determine the genetic susceptibility to alcoholism [MIM:103780].</text>
</comment>
<comment type="disease" evidence="9 10 11">
    <disease id="DI-05652">
        <name>Developmental and epileptic encephalopathy 78</name>
        <acronym>DEE78</acronym>
        <description>A form of epileptic encephalopathy, a heterogeneous group of severe early-onset epilepsies characterized by refractory seizures, neurodevelopmental impairment, and poor prognosis. Development is normal prior to seizure onset, after which cognitive and motor delays become apparent. DEE78 is an autosomal dominant form characterized by onset of refractory seizures in the first days or months of life. Clinical features include severe developmental delay, hypotonia, microcephaly, cortical visual impairment and profound intellectual disability. Some patients manifest a less severe phenotype characterized by pharmacoresponsive epilepsy, autism spectrum disorder and moderate intellectual disability.</description>
        <dbReference type="MIM" id="618557"/>
    </disease>
    <text>The disease is caused by variants affecting the gene represented in this entry.</text>
</comment>
<comment type="similarity">
    <text evidence="14">Belongs to the ligand-gated ion channel (TC 1.A.9) family. Gamma-aminobutyric acid receptor (TC 1.A.9.5) subfamily. GABRA2 sub-subfamily.</text>
</comment>
<comment type="sequence caution" evidence="14">
    <conflict type="erroneous initiation">
        <sequence resource="EMBL-CDS" id="BAD92532"/>
    </conflict>
</comment>
<comment type="online information" name="Protein Spotlight">
    <link uri="https://www.proteinspotlight.org/back_issues/056"/>
    <text>Forbidden fruit - Issue 56 of March 2005</text>
</comment>
<protein>
    <recommendedName>
        <fullName evidence="4">Gamma-aminobutyric acid receptor subunit alpha-2</fullName>
    </recommendedName>
    <alternativeName>
        <fullName evidence="13">GABA(A) receptor subunit alpha-2</fullName>
        <shortName evidence="4">GABAAR subunit alpha-2</shortName>
    </alternativeName>
</protein>
<evidence type="ECO:0000250" key="1">
    <source>
        <dbReference type="UniProtKB" id="P10063"/>
    </source>
</evidence>
<evidence type="ECO:0000250" key="2">
    <source>
        <dbReference type="UniProtKB" id="P14867"/>
    </source>
</evidence>
<evidence type="ECO:0000250" key="3">
    <source>
        <dbReference type="UniProtKB" id="P23576"/>
    </source>
</evidence>
<evidence type="ECO:0000250" key="4">
    <source>
        <dbReference type="UniProtKB" id="P26048"/>
    </source>
</evidence>
<evidence type="ECO:0000250" key="5">
    <source>
        <dbReference type="UniProtKB" id="P28472"/>
    </source>
</evidence>
<evidence type="ECO:0000250" key="6">
    <source>
        <dbReference type="UniProtKB" id="P62813"/>
    </source>
</evidence>
<evidence type="ECO:0000255" key="7"/>
<evidence type="ECO:0000269" key="8">
    <source>
    </source>
</evidence>
<evidence type="ECO:0000269" key="9">
    <source>
    </source>
</evidence>
<evidence type="ECO:0000269" key="10">
    <source>
    </source>
</evidence>
<evidence type="ECO:0000269" key="11">
    <source>
    </source>
</evidence>
<evidence type="ECO:0000303" key="12">
    <source>
    </source>
</evidence>
<evidence type="ECO:0000303" key="13">
    <source>
    </source>
</evidence>
<evidence type="ECO:0000305" key="14"/>
<evidence type="ECO:0000312" key="15">
    <source>
        <dbReference type="HGNC" id="HGNC:4076"/>
    </source>
</evidence>
<proteinExistence type="evidence at protein level"/>